<protein>
    <recommendedName>
        <fullName evidence="1">Large ribosomal subunit protein bL20</fullName>
    </recommendedName>
    <alternativeName>
        <fullName evidence="2">50S ribosomal protein L20</fullName>
    </alternativeName>
</protein>
<keyword id="KW-0687">Ribonucleoprotein</keyword>
<keyword id="KW-0689">Ribosomal protein</keyword>
<keyword id="KW-0694">RNA-binding</keyword>
<keyword id="KW-0699">rRNA-binding</keyword>
<comment type="function">
    <text evidence="1">Binds directly to 23S ribosomal RNA and is necessary for the in vitro assembly process of the 50S ribosomal subunit. It is not involved in the protein synthesizing functions of that subunit.</text>
</comment>
<comment type="similarity">
    <text evidence="1">Belongs to the bacterial ribosomal protein bL20 family.</text>
</comment>
<organism>
    <name type="scientific">Mannheimia succiniciproducens (strain KCTC 0769BP / MBEL55E)</name>
    <dbReference type="NCBI Taxonomy" id="221988"/>
    <lineage>
        <taxon>Bacteria</taxon>
        <taxon>Pseudomonadati</taxon>
        <taxon>Pseudomonadota</taxon>
        <taxon>Gammaproteobacteria</taxon>
        <taxon>Pasteurellales</taxon>
        <taxon>Pasteurellaceae</taxon>
        <taxon>Basfia</taxon>
    </lineage>
</organism>
<evidence type="ECO:0000255" key="1">
    <source>
        <dbReference type="HAMAP-Rule" id="MF_00382"/>
    </source>
</evidence>
<evidence type="ECO:0000305" key="2"/>
<accession>Q65TP7</accession>
<proteinExistence type="inferred from homology"/>
<gene>
    <name evidence="1" type="primary">rplT</name>
    <name type="ordered locus">MS1056</name>
</gene>
<dbReference type="EMBL" id="AE016827">
    <property type="protein sequence ID" value="AAU37663.1"/>
    <property type="molecule type" value="Genomic_DNA"/>
</dbReference>
<dbReference type="RefSeq" id="WP_005596075.1">
    <property type="nucleotide sequence ID" value="NC_006300.1"/>
</dbReference>
<dbReference type="SMR" id="Q65TP7"/>
<dbReference type="STRING" id="221988.MS1056"/>
<dbReference type="GeneID" id="93297698"/>
<dbReference type="KEGG" id="msu:MS1056"/>
<dbReference type="eggNOG" id="COG0292">
    <property type="taxonomic scope" value="Bacteria"/>
</dbReference>
<dbReference type="HOGENOM" id="CLU_123265_0_1_6"/>
<dbReference type="OrthoDB" id="9808966at2"/>
<dbReference type="Proteomes" id="UP000000607">
    <property type="component" value="Chromosome"/>
</dbReference>
<dbReference type="GO" id="GO:1990904">
    <property type="term" value="C:ribonucleoprotein complex"/>
    <property type="evidence" value="ECO:0007669"/>
    <property type="project" value="UniProtKB-KW"/>
</dbReference>
<dbReference type="GO" id="GO:0005840">
    <property type="term" value="C:ribosome"/>
    <property type="evidence" value="ECO:0007669"/>
    <property type="project" value="UniProtKB-KW"/>
</dbReference>
<dbReference type="GO" id="GO:0019843">
    <property type="term" value="F:rRNA binding"/>
    <property type="evidence" value="ECO:0007669"/>
    <property type="project" value="UniProtKB-UniRule"/>
</dbReference>
<dbReference type="GO" id="GO:0003735">
    <property type="term" value="F:structural constituent of ribosome"/>
    <property type="evidence" value="ECO:0007669"/>
    <property type="project" value="InterPro"/>
</dbReference>
<dbReference type="GO" id="GO:0000027">
    <property type="term" value="P:ribosomal large subunit assembly"/>
    <property type="evidence" value="ECO:0007669"/>
    <property type="project" value="UniProtKB-UniRule"/>
</dbReference>
<dbReference type="GO" id="GO:0006412">
    <property type="term" value="P:translation"/>
    <property type="evidence" value="ECO:0007669"/>
    <property type="project" value="InterPro"/>
</dbReference>
<dbReference type="CDD" id="cd07026">
    <property type="entry name" value="Ribosomal_L20"/>
    <property type="match status" value="1"/>
</dbReference>
<dbReference type="FunFam" id="1.10.1900.20:FF:000001">
    <property type="entry name" value="50S ribosomal protein L20"/>
    <property type="match status" value="1"/>
</dbReference>
<dbReference type="Gene3D" id="6.10.160.10">
    <property type="match status" value="1"/>
</dbReference>
<dbReference type="Gene3D" id="1.10.1900.20">
    <property type="entry name" value="Ribosomal protein L20"/>
    <property type="match status" value="1"/>
</dbReference>
<dbReference type="HAMAP" id="MF_00382">
    <property type="entry name" value="Ribosomal_bL20"/>
    <property type="match status" value="1"/>
</dbReference>
<dbReference type="InterPro" id="IPR005813">
    <property type="entry name" value="Ribosomal_bL20"/>
</dbReference>
<dbReference type="InterPro" id="IPR049946">
    <property type="entry name" value="RIBOSOMAL_L20_CS"/>
</dbReference>
<dbReference type="InterPro" id="IPR035566">
    <property type="entry name" value="Ribosomal_protein_bL20_C"/>
</dbReference>
<dbReference type="NCBIfam" id="TIGR01032">
    <property type="entry name" value="rplT_bact"/>
    <property type="match status" value="1"/>
</dbReference>
<dbReference type="PANTHER" id="PTHR10986">
    <property type="entry name" value="39S RIBOSOMAL PROTEIN L20"/>
    <property type="match status" value="1"/>
</dbReference>
<dbReference type="Pfam" id="PF00453">
    <property type="entry name" value="Ribosomal_L20"/>
    <property type="match status" value="1"/>
</dbReference>
<dbReference type="PRINTS" id="PR00062">
    <property type="entry name" value="RIBOSOMALL20"/>
</dbReference>
<dbReference type="SUPFAM" id="SSF74731">
    <property type="entry name" value="Ribosomal protein L20"/>
    <property type="match status" value="1"/>
</dbReference>
<dbReference type="PROSITE" id="PS00937">
    <property type="entry name" value="RIBOSOMAL_L20"/>
    <property type="match status" value="1"/>
</dbReference>
<name>RL20_MANSM</name>
<feature type="chain" id="PRO_0000177177" description="Large ribosomal subunit protein bL20">
    <location>
        <begin position="1"/>
        <end position="117"/>
    </location>
</feature>
<reference key="1">
    <citation type="journal article" date="2004" name="Nat. Biotechnol.">
        <title>The genome sequence of the capnophilic rumen bacterium Mannheimia succiniciproducens.</title>
        <authorList>
            <person name="Hong S.H."/>
            <person name="Kim J.S."/>
            <person name="Lee S.Y."/>
            <person name="In Y.H."/>
            <person name="Choi S.S."/>
            <person name="Rih J.-K."/>
            <person name="Kim C.H."/>
            <person name="Jeong H."/>
            <person name="Hur C.G."/>
            <person name="Kim J.J."/>
        </authorList>
    </citation>
    <scope>NUCLEOTIDE SEQUENCE [LARGE SCALE GENOMIC DNA]</scope>
    <source>
        <strain>KCTC 0769BP / MBEL55E</strain>
    </source>
</reference>
<sequence length="117" mass="13341">MARVKRGVIARARHKKVLKAAKGYYGARSRVYRVAFQAVIKAGQYAYRDRRQRKRQFRQLWIARINAAARQNGLSYSKFINGLKKASVEIDRKILADIAVFDKVAFAALVEKAKSAL</sequence>